<sequence length="177" mass="19060">MSRVGKKPVPVPSGVTATVTGQTVKVKGSKGELQFVVPSQVVVEFKDGAVSVQPKDQSKQARSLWGTSRAQVANLVEGVSKGFEKKLEITGVGYRAAMAGKALKLSLGYSHDIEYEIPAGITIVTPKPTEIVVSGIDRQRVGQVAAEIREYRGPEPYKGKGVKYAGEFIFRKEGKKK</sequence>
<accession>A9W4S5</accession>
<feature type="chain" id="PRO_1000144012" description="Large ribosomal subunit protein uL6">
    <location>
        <begin position="1"/>
        <end position="177"/>
    </location>
</feature>
<protein>
    <recommendedName>
        <fullName evidence="1">Large ribosomal subunit protein uL6</fullName>
    </recommendedName>
    <alternativeName>
        <fullName evidence="2">50S ribosomal protein L6</fullName>
    </alternativeName>
</protein>
<dbReference type="EMBL" id="CP000908">
    <property type="protein sequence ID" value="ABY30581.1"/>
    <property type="molecule type" value="Genomic_DNA"/>
</dbReference>
<dbReference type="RefSeq" id="WP_012253653.1">
    <property type="nucleotide sequence ID" value="NC_010172.1"/>
</dbReference>
<dbReference type="SMR" id="A9W4S5"/>
<dbReference type="KEGG" id="mex:Mext_2186"/>
<dbReference type="eggNOG" id="COG0097">
    <property type="taxonomic scope" value="Bacteria"/>
</dbReference>
<dbReference type="HOGENOM" id="CLU_065464_1_2_5"/>
<dbReference type="BioCyc" id="MEXT419610:MEXT_RS11035-MONOMER"/>
<dbReference type="GO" id="GO:0022625">
    <property type="term" value="C:cytosolic large ribosomal subunit"/>
    <property type="evidence" value="ECO:0007669"/>
    <property type="project" value="TreeGrafter"/>
</dbReference>
<dbReference type="GO" id="GO:0019843">
    <property type="term" value="F:rRNA binding"/>
    <property type="evidence" value="ECO:0007669"/>
    <property type="project" value="UniProtKB-UniRule"/>
</dbReference>
<dbReference type="GO" id="GO:0003735">
    <property type="term" value="F:structural constituent of ribosome"/>
    <property type="evidence" value="ECO:0007669"/>
    <property type="project" value="InterPro"/>
</dbReference>
<dbReference type="GO" id="GO:0002181">
    <property type="term" value="P:cytoplasmic translation"/>
    <property type="evidence" value="ECO:0007669"/>
    <property type="project" value="TreeGrafter"/>
</dbReference>
<dbReference type="FunFam" id="3.90.930.12:FF:000001">
    <property type="entry name" value="50S ribosomal protein L6"/>
    <property type="match status" value="1"/>
</dbReference>
<dbReference type="FunFam" id="3.90.930.12:FF:000002">
    <property type="entry name" value="50S ribosomal protein L6"/>
    <property type="match status" value="1"/>
</dbReference>
<dbReference type="Gene3D" id="3.90.930.12">
    <property type="entry name" value="Ribosomal protein L6, alpha-beta domain"/>
    <property type="match status" value="2"/>
</dbReference>
<dbReference type="HAMAP" id="MF_01365_B">
    <property type="entry name" value="Ribosomal_uL6_B"/>
    <property type="match status" value="1"/>
</dbReference>
<dbReference type="InterPro" id="IPR000702">
    <property type="entry name" value="Ribosomal_uL6-like"/>
</dbReference>
<dbReference type="InterPro" id="IPR036789">
    <property type="entry name" value="Ribosomal_uL6-like_a/b-dom_sf"/>
</dbReference>
<dbReference type="InterPro" id="IPR020040">
    <property type="entry name" value="Ribosomal_uL6_a/b-dom"/>
</dbReference>
<dbReference type="InterPro" id="IPR019906">
    <property type="entry name" value="Ribosomal_uL6_bac-type"/>
</dbReference>
<dbReference type="InterPro" id="IPR002358">
    <property type="entry name" value="Ribosomal_uL6_CS"/>
</dbReference>
<dbReference type="NCBIfam" id="TIGR03654">
    <property type="entry name" value="L6_bact"/>
    <property type="match status" value="1"/>
</dbReference>
<dbReference type="PANTHER" id="PTHR11655">
    <property type="entry name" value="60S/50S RIBOSOMAL PROTEIN L6/L9"/>
    <property type="match status" value="1"/>
</dbReference>
<dbReference type="PANTHER" id="PTHR11655:SF14">
    <property type="entry name" value="LARGE RIBOSOMAL SUBUNIT PROTEIN UL6M"/>
    <property type="match status" value="1"/>
</dbReference>
<dbReference type="Pfam" id="PF00347">
    <property type="entry name" value="Ribosomal_L6"/>
    <property type="match status" value="2"/>
</dbReference>
<dbReference type="PIRSF" id="PIRSF002162">
    <property type="entry name" value="Ribosomal_L6"/>
    <property type="match status" value="1"/>
</dbReference>
<dbReference type="PRINTS" id="PR00059">
    <property type="entry name" value="RIBOSOMALL6"/>
</dbReference>
<dbReference type="SUPFAM" id="SSF56053">
    <property type="entry name" value="Ribosomal protein L6"/>
    <property type="match status" value="2"/>
</dbReference>
<dbReference type="PROSITE" id="PS00525">
    <property type="entry name" value="RIBOSOMAL_L6_1"/>
    <property type="match status" value="1"/>
</dbReference>
<organism>
    <name type="scientific">Methylorubrum extorquens (strain PA1)</name>
    <name type="common">Methylobacterium extorquens</name>
    <dbReference type="NCBI Taxonomy" id="419610"/>
    <lineage>
        <taxon>Bacteria</taxon>
        <taxon>Pseudomonadati</taxon>
        <taxon>Pseudomonadota</taxon>
        <taxon>Alphaproteobacteria</taxon>
        <taxon>Hyphomicrobiales</taxon>
        <taxon>Methylobacteriaceae</taxon>
        <taxon>Methylorubrum</taxon>
    </lineage>
</organism>
<gene>
    <name evidence="1" type="primary">rplF</name>
    <name type="ordered locus">Mext_2186</name>
</gene>
<comment type="function">
    <text evidence="1">This protein binds to the 23S rRNA, and is important in its secondary structure. It is located near the subunit interface in the base of the L7/L12 stalk, and near the tRNA binding site of the peptidyltransferase center.</text>
</comment>
<comment type="subunit">
    <text evidence="1">Part of the 50S ribosomal subunit.</text>
</comment>
<comment type="similarity">
    <text evidence="1">Belongs to the universal ribosomal protein uL6 family.</text>
</comment>
<reference key="1">
    <citation type="submission" date="2007-12" db="EMBL/GenBank/DDBJ databases">
        <title>Complete sequence of Methylobacterium extorquens PA1.</title>
        <authorList>
            <consortium name="US DOE Joint Genome Institute"/>
            <person name="Copeland A."/>
            <person name="Lucas S."/>
            <person name="Lapidus A."/>
            <person name="Barry K."/>
            <person name="Glavina del Rio T."/>
            <person name="Dalin E."/>
            <person name="Tice H."/>
            <person name="Pitluck S."/>
            <person name="Saunders E."/>
            <person name="Brettin T."/>
            <person name="Bruce D."/>
            <person name="Detter J.C."/>
            <person name="Han C."/>
            <person name="Schmutz J."/>
            <person name="Larimer F."/>
            <person name="Land M."/>
            <person name="Hauser L."/>
            <person name="Kyrpides N."/>
            <person name="Kim E."/>
            <person name="Marx C."/>
            <person name="Richardson P."/>
        </authorList>
    </citation>
    <scope>NUCLEOTIDE SEQUENCE [LARGE SCALE GENOMIC DNA]</scope>
    <source>
        <strain>PA1</strain>
    </source>
</reference>
<proteinExistence type="inferred from homology"/>
<keyword id="KW-0687">Ribonucleoprotein</keyword>
<keyword id="KW-0689">Ribosomal protein</keyword>
<keyword id="KW-0694">RNA-binding</keyword>
<keyword id="KW-0699">rRNA-binding</keyword>
<name>RL6_METEP</name>
<evidence type="ECO:0000255" key="1">
    <source>
        <dbReference type="HAMAP-Rule" id="MF_01365"/>
    </source>
</evidence>
<evidence type="ECO:0000305" key="2"/>